<keyword id="KW-0067">ATP-binding</keyword>
<keyword id="KW-0997">Cell inner membrane</keyword>
<keyword id="KW-1003">Cell membrane</keyword>
<keyword id="KW-0406">Ion transport</keyword>
<keyword id="KW-0472">Membrane</keyword>
<keyword id="KW-0547">Nucleotide-binding</keyword>
<keyword id="KW-0630">Potassium</keyword>
<keyword id="KW-0633">Potassium transport</keyword>
<keyword id="KW-1185">Reference proteome</keyword>
<keyword id="KW-0812">Transmembrane</keyword>
<keyword id="KW-1133">Transmembrane helix</keyword>
<keyword id="KW-0813">Transport</keyword>
<accession>A7MQV0</accession>
<evidence type="ECO:0000255" key="1">
    <source>
        <dbReference type="HAMAP-Rule" id="MF_00276"/>
    </source>
</evidence>
<gene>
    <name evidence="1" type="primary">kdpC</name>
    <name type="ordered locus">ESA_02643</name>
</gene>
<sequence length="190" mass="20182">MAMLRPALTLLVFLTILTGGVYPLATTVLGQWWFKDQAEGSLIRQHDEVRGSRLIGQAFSEAKYFQGRPSATAEAPYNPMASGGSNLAASNPALDKEVQARVQALRAANPDARAAVPVELVTASASGLDYGITPDAAFWQAPRVAQARGISEAEVGRLIRENTDAPLAGFLGQPVVNVLKLNMALDALQP</sequence>
<protein>
    <recommendedName>
        <fullName evidence="1">Potassium-transporting ATPase KdpC subunit</fullName>
    </recommendedName>
    <alternativeName>
        <fullName evidence="1">ATP phosphohydrolase [potassium-transporting] C chain</fullName>
    </alternativeName>
    <alternativeName>
        <fullName evidence="1">Potassium-binding and translocating subunit C</fullName>
    </alternativeName>
    <alternativeName>
        <fullName evidence="1">Potassium-translocating ATPase C chain</fullName>
    </alternativeName>
</protein>
<proteinExistence type="inferred from homology"/>
<reference key="1">
    <citation type="journal article" date="2010" name="PLoS ONE">
        <title>Genome sequence of Cronobacter sakazakii BAA-894 and comparative genomic hybridization analysis with other Cronobacter species.</title>
        <authorList>
            <person name="Kucerova E."/>
            <person name="Clifton S.W."/>
            <person name="Xia X.Q."/>
            <person name="Long F."/>
            <person name="Porwollik S."/>
            <person name="Fulton L."/>
            <person name="Fronick C."/>
            <person name="Minx P."/>
            <person name="Kyung K."/>
            <person name="Warren W."/>
            <person name="Fulton R."/>
            <person name="Feng D."/>
            <person name="Wollam A."/>
            <person name="Shah N."/>
            <person name="Bhonagiri V."/>
            <person name="Nash W.E."/>
            <person name="Hallsworth-Pepin K."/>
            <person name="Wilson R.K."/>
            <person name="McClelland M."/>
            <person name="Forsythe S.J."/>
        </authorList>
    </citation>
    <scope>NUCLEOTIDE SEQUENCE [LARGE SCALE GENOMIC DNA]</scope>
    <source>
        <strain>ATCC BAA-894</strain>
    </source>
</reference>
<dbReference type="EMBL" id="CP000783">
    <property type="protein sequence ID" value="ABU77883.1"/>
    <property type="molecule type" value="Genomic_DNA"/>
</dbReference>
<dbReference type="RefSeq" id="WP_012125350.1">
    <property type="nucleotide sequence ID" value="NC_009778.1"/>
</dbReference>
<dbReference type="SMR" id="A7MQV0"/>
<dbReference type="KEGG" id="esa:ESA_02643"/>
<dbReference type="PATRIC" id="fig|290339.8.peg.2353"/>
<dbReference type="HOGENOM" id="CLU_077094_2_0_6"/>
<dbReference type="Proteomes" id="UP000000260">
    <property type="component" value="Chromosome"/>
</dbReference>
<dbReference type="GO" id="GO:0005886">
    <property type="term" value="C:plasma membrane"/>
    <property type="evidence" value="ECO:0007669"/>
    <property type="project" value="UniProtKB-SubCell"/>
</dbReference>
<dbReference type="GO" id="GO:0005524">
    <property type="term" value="F:ATP binding"/>
    <property type="evidence" value="ECO:0007669"/>
    <property type="project" value="UniProtKB-UniRule"/>
</dbReference>
<dbReference type="GO" id="GO:0008556">
    <property type="term" value="F:P-type potassium transmembrane transporter activity"/>
    <property type="evidence" value="ECO:0007669"/>
    <property type="project" value="InterPro"/>
</dbReference>
<dbReference type="HAMAP" id="MF_00276">
    <property type="entry name" value="KdpC"/>
    <property type="match status" value="1"/>
</dbReference>
<dbReference type="InterPro" id="IPR003820">
    <property type="entry name" value="KdpC"/>
</dbReference>
<dbReference type="NCBIfam" id="TIGR00681">
    <property type="entry name" value="kdpC"/>
    <property type="match status" value="1"/>
</dbReference>
<dbReference type="NCBIfam" id="NF001454">
    <property type="entry name" value="PRK00315.1"/>
    <property type="match status" value="1"/>
</dbReference>
<dbReference type="PANTHER" id="PTHR30042">
    <property type="entry name" value="POTASSIUM-TRANSPORTING ATPASE C CHAIN"/>
    <property type="match status" value="1"/>
</dbReference>
<dbReference type="PANTHER" id="PTHR30042:SF2">
    <property type="entry name" value="POTASSIUM-TRANSPORTING ATPASE KDPC SUBUNIT"/>
    <property type="match status" value="1"/>
</dbReference>
<dbReference type="Pfam" id="PF02669">
    <property type="entry name" value="KdpC"/>
    <property type="match status" value="1"/>
</dbReference>
<dbReference type="PIRSF" id="PIRSF001296">
    <property type="entry name" value="K_ATPase_KdpC"/>
    <property type="match status" value="1"/>
</dbReference>
<comment type="function">
    <text evidence="1">Part of the high-affinity ATP-driven potassium transport (or Kdp) system, which catalyzes the hydrolysis of ATP coupled with the electrogenic transport of potassium into the cytoplasm. This subunit acts as a catalytic chaperone that increases the ATP-binding affinity of the ATP-hydrolyzing subunit KdpB by the formation of a transient KdpB/KdpC/ATP ternary complex.</text>
</comment>
<comment type="subunit">
    <text evidence="1">The system is composed of three essential subunits: KdpA, KdpB and KdpC.</text>
</comment>
<comment type="subcellular location">
    <subcellularLocation>
        <location evidence="1">Cell inner membrane</location>
        <topology evidence="1">Single-pass membrane protein</topology>
    </subcellularLocation>
</comment>
<comment type="similarity">
    <text evidence="1">Belongs to the KdpC family.</text>
</comment>
<feature type="chain" id="PRO_1000022283" description="Potassium-transporting ATPase KdpC subunit">
    <location>
        <begin position="1"/>
        <end position="190"/>
    </location>
</feature>
<feature type="transmembrane region" description="Helical" evidence="1">
    <location>
        <begin position="10"/>
        <end position="30"/>
    </location>
</feature>
<organism>
    <name type="scientific">Cronobacter sakazakii (strain ATCC BAA-894)</name>
    <name type="common">Enterobacter sakazakii</name>
    <dbReference type="NCBI Taxonomy" id="290339"/>
    <lineage>
        <taxon>Bacteria</taxon>
        <taxon>Pseudomonadati</taxon>
        <taxon>Pseudomonadota</taxon>
        <taxon>Gammaproteobacteria</taxon>
        <taxon>Enterobacterales</taxon>
        <taxon>Enterobacteriaceae</taxon>
        <taxon>Cronobacter</taxon>
    </lineage>
</organism>
<name>KDPC_CROS8</name>